<name>PHO16_ARATH</name>
<organism>
    <name type="scientific">Arabidopsis thaliana</name>
    <name type="common">Mouse-ear cress</name>
    <dbReference type="NCBI Taxonomy" id="3702"/>
    <lineage>
        <taxon>Eukaryota</taxon>
        <taxon>Viridiplantae</taxon>
        <taxon>Streptophyta</taxon>
        <taxon>Embryophyta</taxon>
        <taxon>Tracheophyta</taxon>
        <taxon>Spermatophyta</taxon>
        <taxon>Magnoliopsida</taxon>
        <taxon>eudicotyledons</taxon>
        <taxon>Gunneridae</taxon>
        <taxon>Pentapetalae</taxon>
        <taxon>rosids</taxon>
        <taxon>malvids</taxon>
        <taxon>Brassicales</taxon>
        <taxon>Brassicaceae</taxon>
        <taxon>Camelineae</taxon>
        <taxon>Arabidopsis</taxon>
    </lineage>
</organism>
<reference key="1">
    <citation type="journal article" date="2004" name="Plant Physiol.">
        <title>Structure and expression profile of the Arabidopsis PHO1 gene family indicates a broad role in inorganic phosphate homeostasis.</title>
        <authorList>
            <person name="Wang Y."/>
            <person name="Ribot C."/>
            <person name="Rezzonico E."/>
            <person name="Poirier Y."/>
        </authorList>
    </citation>
    <scope>NUCLEOTIDE SEQUENCE [MRNA]</scope>
    <scope>TISSUE SPECIFICITY</scope>
    <scope>INDUCTION</scope>
    <scope>GENE FAMILY</scope>
    <scope>NOMENCLATURE</scope>
</reference>
<reference key="2">
    <citation type="journal article" date="1999" name="Nature">
        <title>Sequence and analysis of chromosome 2 of the plant Arabidopsis thaliana.</title>
        <authorList>
            <person name="Lin X."/>
            <person name="Kaul S."/>
            <person name="Rounsley S.D."/>
            <person name="Shea T.P."/>
            <person name="Benito M.-I."/>
            <person name="Town C.D."/>
            <person name="Fujii C.Y."/>
            <person name="Mason T.M."/>
            <person name="Bowman C.L."/>
            <person name="Barnstead M.E."/>
            <person name="Feldblyum T.V."/>
            <person name="Buell C.R."/>
            <person name="Ketchum K.A."/>
            <person name="Lee J.J."/>
            <person name="Ronning C.M."/>
            <person name="Koo H.L."/>
            <person name="Moffat K.S."/>
            <person name="Cronin L.A."/>
            <person name="Shen M."/>
            <person name="Pai G."/>
            <person name="Van Aken S."/>
            <person name="Umayam L."/>
            <person name="Tallon L.J."/>
            <person name="Gill J.E."/>
            <person name="Adams M.D."/>
            <person name="Carrera A.J."/>
            <person name="Creasy T.H."/>
            <person name="Goodman H.M."/>
            <person name="Somerville C.R."/>
            <person name="Copenhaver G.P."/>
            <person name="Preuss D."/>
            <person name="Nierman W.C."/>
            <person name="White O."/>
            <person name="Eisen J.A."/>
            <person name="Salzberg S.L."/>
            <person name="Fraser C.M."/>
            <person name="Venter J.C."/>
        </authorList>
    </citation>
    <scope>NUCLEOTIDE SEQUENCE [LARGE SCALE GENOMIC DNA]</scope>
    <source>
        <strain>cv. Columbia</strain>
    </source>
</reference>
<reference key="3">
    <citation type="journal article" date="2017" name="Plant J.">
        <title>Araport11: a complete reannotation of the Arabidopsis thaliana reference genome.</title>
        <authorList>
            <person name="Cheng C.Y."/>
            <person name="Krishnakumar V."/>
            <person name="Chan A.P."/>
            <person name="Thibaud-Nissen F."/>
            <person name="Schobel S."/>
            <person name="Town C.D."/>
        </authorList>
    </citation>
    <scope>GENOME REANNOTATION</scope>
    <source>
        <strain>cv. Columbia</strain>
    </source>
</reference>
<comment type="function">
    <text evidence="1">May transport inorganic phosphate (Pi).</text>
</comment>
<comment type="subcellular location">
    <subcellularLocation>
        <location evidence="6">Cell membrane</location>
        <topology evidence="6">Multi-pass membrane protein</topology>
    </subcellularLocation>
</comment>
<comment type="tissue specificity">
    <text evidence="5">Specifically expressed in anther connective tissue.</text>
</comment>
<comment type="induction">
    <text evidence="5">Not induced by Pi deficiency.</text>
</comment>
<comment type="similarity">
    <text evidence="6">Belongs to the SYG1 (TC 2.A.94) family.</text>
</comment>
<comment type="sequence caution" evidence="6">
    <conflict type="erroneous gene model prediction">
        <sequence resource="EMBL-CDS" id="AAC34477"/>
    </conflict>
</comment>
<keyword id="KW-1003">Cell membrane</keyword>
<keyword id="KW-0472">Membrane</keyword>
<keyword id="KW-0592">Phosphate transport</keyword>
<keyword id="KW-1185">Reference proteome</keyword>
<keyword id="KW-0812">Transmembrane</keyword>
<keyword id="KW-1133">Transmembrane helix</keyword>
<keyword id="KW-0813">Transport</keyword>
<protein>
    <recommendedName>
        <fullName>Phosphate transporter PHO1 homolog 6</fullName>
    </recommendedName>
    <alternativeName>
        <fullName>Protein PHO1 homolog 6</fullName>
        <shortName>AtPHO1;H6</shortName>
    </alternativeName>
</protein>
<sequence>MKFGKDFSSEWQQAYVDYKYLKTLVKDINRFKRKTNLHGGQISLSSTVLEIEDGITTATIQVSSTASQRYETTFLMTAEKGGEYELVFFRRLDDEFNKVEKFYREKVDEVVKEAAVLNKQMDALIAFRLKMKEESTVEMARFALHGVVSPAELAKNPSMKVHMEAIEEGGSSRAGRRSDEDDYYTDEEDHNDVFFTPANNLSKMKSSSSAFIEVLDSIKINNTKEALQSNTKSVLKVSNHTELKFSRDNLRKIEEKLICAFVEFHRKLWYLKSYSFLNVLALSKILTKYDKITSRDAAKSYMKMVDKSCLGSSDEVMKLMENVEATFIKQFTNGNRTKGMNILRPKPKRERHRLTFSTGFLGGCMFSLIVALVAIVRTRNILQDDGQKQYMNTMFPLYSLFGFIMLHMTMYAANIYFWRQYRVNYSFIFGFKQGTELGYKQVLFVGFSIGALALLCVLANLDMETDPKTKDYQALTELLPLFLLIAMFVVLVVPFNIFYRSSRFFFLTTLFHMLAAPLYKVTLPDFFLADQLCSQAQTLRSIEFYICYYGWGDFKQRKNTCKDSQVFNTFLFIVSAFPFFSRFLQCMRRMLEEKNIEQGYNGFKYIVIVVAVCLGMAYEVDDEKDRQIIWRLLGGITSAMAVVFCTYWDLVYDWGLLNRTSKNPWLRDNLLIPHKEVYVLAMILNVVLRFAWMQTVLDFKFESIHTQTVVAVVASLEIIRRGIWNFFRLENEHLNNVGKYRAFKAVSLPFNYEVDH</sequence>
<accession>Q6R8G4</accession>
<accession>O81049</accession>
<dbReference type="EMBL" id="AY507958">
    <property type="protein sequence ID" value="AAR99488.1"/>
    <property type="molecule type" value="mRNA"/>
</dbReference>
<dbReference type="EMBL" id="AC005313">
    <property type="protein sequence ID" value="AAC34477.1"/>
    <property type="status" value="ALT_SEQ"/>
    <property type="molecule type" value="Genomic_DNA"/>
</dbReference>
<dbReference type="EMBL" id="CP002685">
    <property type="status" value="NOT_ANNOTATED_CDS"/>
    <property type="molecule type" value="Genomic_DNA"/>
</dbReference>
<dbReference type="PIR" id="T02701">
    <property type="entry name" value="T02701"/>
</dbReference>
<dbReference type="SMR" id="Q6R8G4"/>
<dbReference type="FunCoup" id="Q6R8G4">
    <property type="interactions" value="2572"/>
</dbReference>
<dbReference type="STRING" id="3702.Q6R8G4"/>
<dbReference type="PaxDb" id="3702-AT2G03250.1"/>
<dbReference type="Araport" id="AT2G03250"/>
<dbReference type="TAIR" id="AT2G03250"/>
<dbReference type="eggNOG" id="KOG1162">
    <property type="taxonomic scope" value="Eukaryota"/>
</dbReference>
<dbReference type="HOGENOM" id="CLU_006116_2_0_1"/>
<dbReference type="InParanoid" id="Q6R8G4"/>
<dbReference type="PhylomeDB" id="Q6R8G4"/>
<dbReference type="PRO" id="PR:Q6R8G4"/>
<dbReference type="Proteomes" id="UP000006548">
    <property type="component" value="Chromosome 2"/>
</dbReference>
<dbReference type="ExpressionAtlas" id="Q6R8G4">
    <property type="expression patterns" value="baseline and differential"/>
</dbReference>
<dbReference type="GO" id="GO:0005886">
    <property type="term" value="C:plasma membrane"/>
    <property type="evidence" value="ECO:0007669"/>
    <property type="project" value="UniProtKB-SubCell"/>
</dbReference>
<dbReference type="GO" id="GO:0005802">
    <property type="term" value="C:trans-Golgi network"/>
    <property type="evidence" value="ECO:0000318"/>
    <property type="project" value="GO_Central"/>
</dbReference>
<dbReference type="GO" id="GO:0000822">
    <property type="term" value="F:inositol hexakisphosphate binding"/>
    <property type="evidence" value="ECO:0000318"/>
    <property type="project" value="GO_Central"/>
</dbReference>
<dbReference type="GO" id="GO:0005315">
    <property type="term" value="F:phosphate transmembrane transporter activity"/>
    <property type="evidence" value="ECO:0000318"/>
    <property type="project" value="GO_Central"/>
</dbReference>
<dbReference type="GO" id="GO:0016036">
    <property type="term" value="P:cellular response to phosphate starvation"/>
    <property type="evidence" value="ECO:0000318"/>
    <property type="project" value="GO_Central"/>
</dbReference>
<dbReference type="GO" id="GO:0006817">
    <property type="term" value="P:phosphate ion transport"/>
    <property type="evidence" value="ECO:0000318"/>
    <property type="project" value="GO_Central"/>
</dbReference>
<dbReference type="CDD" id="cd14476">
    <property type="entry name" value="SPX_PHO1_like"/>
    <property type="match status" value="1"/>
</dbReference>
<dbReference type="InterPro" id="IPR004342">
    <property type="entry name" value="EXS_C"/>
</dbReference>
<dbReference type="InterPro" id="IPR034092">
    <property type="entry name" value="PHO1_SPX"/>
</dbReference>
<dbReference type="InterPro" id="IPR004331">
    <property type="entry name" value="SPX_dom"/>
</dbReference>
<dbReference type="PANTHER" id="PTHR10783:SF93">
    <property type="entry name" value="PHOSPHATE TRANSPORTER PHO1 HOMOLOG 6"/>
    <property type="match status" value="1"/>
</dbReference>
<dbReference type="PANTHER" id="PTHR10783">
    <property type="entry name" value="XENOTROPIC AND POLYTROPIC RETROVIRUS RECEPTOR 1-RELATED"/>
    <property type="match status" value="1"/>
</dbReference>
<dbReference type="Pfam" id="PF03124">
    <property type="entry name" value="EXS"/>
    <property type="match status" value="1"/>
</dbReference>
<dbReference type="Pfam" id="PF03105">
    <property type="entry name" value="SPX"/>
    <property type="match status" value="2"/>
</dbReference>
<dbReference type="PROSITE" id="PS51380">
    <property type="entry name" value="EXS"/>
    <property type="match status" value="1"/>
</dbReference>
<dbReference type="PROSITE" id="PS51382">
    <property type="entry name" value="SPX"/>
    <property type="match status" value="1"/>
</dbReference>
<feature type="chain" id="PRO_0000398160" description="Phosphate transporter PHO1 homolog 6">
    <location>
        <begin position="1"/>
        <end position="756"/>
    </location>
</feature>
<feature type="topological domain" description="Cytoplasmic" evidence="2">
    <location>
        <begin position="1"/>
        <end position="355"/>
    </location>
</feature>
<feature type="transmembrane region" description="Helical" evidence="2">
    <location>
        <begin position="356"/>
        <end position="376"/>
    </location>
</feature>
<feature type="topological domain" description="Extracellular" evidence="2">
    <location>
        <begin position="377"/>
        <end position="396"/>
    </location>
</feature>
<feature type="transmembrane region" description="Helical" evidence="2">
    <location>
        <begin position="397"/>
        <end position="417"/>
    </location>
</feature>
<feature type="topological domain" description="Cytoplasmic" evidence="2">
    <location>
        <begin position="418"/>
        <end position="440"/>
    </location>
</feature>
<feature type="transmembrane region" description="Helical" evidence="2">
    <location>
        <begin position="441"/>
        <end position="461"/>
    </location>
</feature>
<feature type="topological domain" description="Extracellular" evidence="2">
    <location>
        <begin position="462"/>
        <end position="477"/>
    </location>
</feature>
<feature type="transmembrane region" description="Helical" evidence="2">
    <location>
        <begin position="478"/>
        <end position="498"/>
    </location>
</feature>
<feature type="topological domain" description="Cytoplasmic" evidence="2">
    <location>
        <begin position="499"/>
        <end position="631"/>
    </location>
</feature>
<feature type="transmembrane region" description="Helical" evidence="2">
    <location>
        <begin position="632"/>
        <end position="652"/>
    </location>
</feature>
<feature type="topological domain" description="Extracellular" evidence="2">
    <location>
        <begin position="653"/>
        <end position="676"/>
    </location>
</feature>
<feature type="transmembrane region" description="Helical" evidence="2">
    <location>
        <begin position="677"/>
        <end position="697"/>
    </location>
</feature>
<feature type="topological domain" description="Cytoplasmic" evidence="2">
    <location>
        <begin position="698"/>
        <end position="756"/>
    </location>
</feature>
<feature type="domain" description="SPX" evidence="4">
    <location>
        <begin position="1"/>
        <end position="303"/>
    </location>
</feature>
<feature type="domain" description="EXS" evidence="3">
    <location>
        <begin position="562"/>
        <end position="756"/>
    </location>
</feature>
<proteinExistence type="evidence at transcript level"/>
<gene>
    <name type="primary">PHO1-H6</name>
    <name type="ordered locus">At2g03250</name>
    <name type="ORF">T18E12.8</name>
</gene>
<evidence type="ECO:0000250" key="1"/>
<evidence type="ECO:0000255" key="2"/>
<evidence type="ECO:0000255" key="3">
    <source>
        <dbReference type="PROSITE-ProRule" id="PRU00712"/>
    </source>
</evidence>
<evidence type="ECO:0000255" key="4">
    <source>
        <dbReference type="PROSITE-ProRule" id="PRU00714"/>
    </source>
</evidence>
<evidence type="ECO:0000269" key="5">
    <source>
    </source>
</evidence>
<evidence type="ECO:0000305" key="6"/>